<evidence type="ECO:0000255" key="1">
    <source>
        <dbReference type="HAMAP-Rule" id="MF_00131"/>
    </source>
</evidence>
<sequence>MTDLTTIFKNHKAFIAFVVAGDPNFEATVDQVVALAEAGCDLVEIGIPFSDPVADGPEIQAADLRAFDQHITPQRVFELVVAIREKTTIPLVFLTYANIVYQFGYAAFAQQCQSLNVAGLIIPDMPLEASGELRPTLDHYGIALIPLIAPTSDDARIAAIAQQARGFIYVVSSLGVTGTRRHITTDLATLVAKIRHATTLPVAIGFGIHEPAQAQAMAQIADGVIVGSAVVHLIATHQPATAVLRDYTRRMRRALDGRTADTVD</sequence>
<proteinExistence type="inferred from homology"/>
<protein>
    <recommendedName>
        <fullName evidence="1">Tryptophan synthase alpha chain</fullName>
        <ecNumber evidence="1">4.2.1.20</ecNumber>
    </recommendedName>
</protein>
<reference key="1">
    <citation type="journal article" date="2003" name="Proc. Natl. Acad. Sci. U.S.A.">
        <title>Complete genome sequence of Lactobacillus plantarum WCFS1.</title>
        <authorList>
            <person name="Kleerebezem M."/>
            <person name="Boekhorst J."/>
            <person name="van Kranenburg R."/>
            <person name="Molenaar D."/>
            <person name="Kuipers O.P."/>
            <person name="Leer R."/>
            <person name="Tarchini R."/>
            <person name="Peters S.A."/>
            <person name="Sandbrink H.M."/>
            <person name="Fiers M.W.E.J."/>
            <person name="Stiekema W."/>
            <person name="Klein Lankhorst R.M."/>
            <person name="Bron P.A."/>
            <person name="Hoffer S.M."/>
            <person name="Nierop Groot M.N."/>
            <person name="Kerkhoven R."/>
            <person name="De Vries M."/>
            <person name="Ursing B."/>
            <person name="De Vos W.M."/>
            <person name="Siezen R.J."/>
        </authorList>
    </citation>
    <scope>NUCLEOTIDE SEQUENCE [LARGE SCALE GENOMIC DNA]</scope>
    <source>
        <strain>ATCC BAA-793 / NCIMB 8826 / WCFS1</strain>
    </source>
</reference>
<reference key="2">
    <citation type="journal article" date="2012" name="J. Bacteriol.">
        <title>Complete resequencing and reannotation of the Lactobacillus plantarum WCFS1 genome.</title>
        <authorList>
            <person name="Siezen R.J."/>
            <person name="Francke C."/>
            <person name="Renckens B."/>
            <person name="Boekhorst J."/>
            <person name="Wels M."/>
            <person name="Kleerebezem M."/>
            <person name="van Hijum S.A."/>
        </authorList>
    </citation>
    <scope>NUCLEOTIDE SEQUENCE [LARGE SCALE GENOMIC DNA]</scope>
    <scope>GENOME REANNOTATION</scope>
    <source>
        <strain>ATCC BAA-793 / NCIMB 8826 / WCFS1</strain>
    </source>
</reference>
<keyword id="KW-0028">Amino-acid biosynthesis</keyword>
<keyword id="KW-0057">Aromatic amino acid biosynthesis</keyword>
<keyword id="KW-0456">Lyase</keyword>
<keyword id="KW-1185">Reference proteome</keyword>
<keyword id="KW-0822">Tryptophan biosynthesis</keyword>
<comment type="function">
    <text evidence="1">The alpha subunit is responsible for the aldol cleavage of indoleglycerol phosphate to indole and glyceraldehyde 3-phosphate.</text>
</comment>
<comment type="catalytic activity">
    <reaction evidence="1">
        <text>(1S,2R)-1-C-(indol-3-yl)glycerol 3-phosphate + L-serine = D-glyceraldehyde 3-phosphate + L-tryptophan + H2O</text>
        <dbReference type="Rhea" id="RHEA:10532"/>
        <dbReference type="ChEBI" id="CHEBI:15377"/>
        <dbReference type="ChEBI" id="CHEBI:33384"/>
        <dbReference type="ChEBI" id="CHEBI:57912"/>
        <dbReference type="ChEBI" id="CHEBI:58866"/>
        <dbReference type="ChEBI" id="CHEBI:59776"/>
        <dbReference type="EC" id="4.2.1.20"/>
    </reaction>
</comment>
<comment type="pathway">
    <text evidence="1">Amino-acid biosynthesis; L-tryptophan biosynthesis; L-tryptophan from chorismate: step 5/5.</text>
</comment>
<comment type="subunit">
    <text evidence="1">Tetramer of two alpha and two beta chains.</text>
</comment>
<comment type="similarity">
    <text evidence="1">Belongs to the TrpA family.</text>
</comment>
<gene>
    <name evidence="1" type="primary">trpA</name>
    <name type="ordered locus">lp_1658</name>
</gene>
<feature type="chain" id="PRO_0000098795" description="Tryptophan synthase alpha chain">
    <location>
        <begin position="1"/>
        <end position="264"/>
    </location>
</feature>
<feature type="active site" description="Proton acceptor" evidence="1">
    <location>
        <position position="44"/>
    </location>
</feature>
<feature type="active site" description="Proton acceptor" evidence="1">
    <location>
        <position position="55"/>
    </location>
</feature>
<accession>Q88WH9</accession>
<accession>F9UP24</accession>
<organism>
    <name type="scientific">Lactiplantibacillus plantarum (strain ATCC BAA-793 / NCIMB 8826 / WCFS1)</name>
    <name type="common">Lactobacillus plantarum</name>
    <dbReference type="NCBI Taxonomy" id="220668"/>
    <lineage>
        <taxon>Bacteria</taxon>
        <taxon>Bacillati</taxon>
        <taxon>Bacillota</taxon>
        <taxon>Bacilli</taxon>
        <taxon>Lactobacillales</taxon>
        <taxon>Lactobacillaceae</taxon>
        <taxon>Lactiplantibacillus</taxon>
    </lineage>
</organism>
<dbReference type="EC" id="4.2.1.20" evidence="1"/>
<dbReference type="EMBL" id="AL935263">
    <property type="protein sequence ID" value="CCC78963.1"/>
    <property type="molecule type" value="Genomic_DNA"/>
</dbReference>
<dbReference type="RefSeq" id="WP_003640398.1">
    <property type="nucleotide sequence ID" value="NC_004567.2"/>
</dbReference>
<dbReference type="RefSeq" id="YP_004889477.1">
    <property type="nucleotide sequence ID" value="NC_004567.2"/>
</dbReference>
<dbReference type="SMR" id="Q88WH9"/>
<dbReference type="STRING" id="220668.lp_1658"/>
<dbReference type="EnsemblBacteria" id="CCC78963">
    <property type="protein sequence ID" value="CCC78963"/>
    <property type="gene ID" value="lp_1658"/>
</dbReference>
<dbReference type="KEGG" id="lpl:lp_1658"/>
<dbReference type="PATRIC" id="fig|220668.9.peg.1399"/>
<dbReference type="eggNOG" id="COG0159">
    <property type="taxonomic scope" value="Bacteria"/>
</dbReference>
<dbReference type="HOGENOM" id="CLU_016734_0_0_9"/>
<dbReference type="OrthoDB" id="9804578at2"/>
<dbReference type="PhylomeDB" id="Q88WH9"/>
<dbReference type="UniPathway" id="UPA00035">
    <property type="reaction ID" value="UER00044"/>
</dbReference>
<dbReference type="Proteomes" id="UP000000432">
    <property type="component" value="Chromosome"/>
</dbReference>
<dbReference type="GO" id="GO:0005829">
    <property type="term" value="C:cytosol"/>
    <property type="evidence" value="ECO:0007669"/>
    <property type="project" value="TreeGrafter"/>
</dbReference>
<dbReference type="GO" id="GO:0004834">
    <property type="term" value="F:tryptophan synthase activity"/>
    <property type="evidence" value="ECO:0007669"/>
    <property type="project" value="UniProtKB-UniRule"/>
</dbReference>
<dbReference type="CDD" id="cd04724">
    <property type="entry name" value="Tryptophan_synthase_alpha"/>
    <property type="match status" value="1"/>
</dbReference>
<dbReference type="FunFam" id="3.20.20.70:FF:000037">
    <property type="entry name" value="Tryptophan synthase alpha chain"/>
    <property type="match status" value="1"/>
</dbReference>
<dbReference type="Gene3D" id="3.20.20.70">
    <property type="entry name" value="Aldolase class I"/>
    <property type="match status" value="1"/>
</dbReference>
<dbReference type="HAMAP" id="MF_00131">
    <property type="entry name" value="Trp_synth_alpha"/>
    <property type="match status" value="1"/>
</dbReference>
<dbReference type="InterPro" id="IPR013785">
    <property type="entry name" value="Aldolase_TIM"/>
</dbReference>
<dbReference type="InterPro" id="IPR011060">
    <property type="entry name" value="RibuloseP-bd_barrel"/>
</dbReference>
<dbReference type="InterPro" id="IPR018204">
    <property type="entry name" value="Trp_synthase_alpha_AS"/>
</dbReference>
<dbReference type="InterPro" id="IPR002028">
    <property type="entry name" value="Trp_synthase_suA"/>
</dbReference>
<dbReference type="NCBIfam" id="TIGR00262">
    <property type="entry name" value="trpA"/>
    <property type="match status" value="1"/>
</dbReference>
<dbReference type="PANTHER" id="PTHR43406:SF1">
    <property type="entry name" value="TRYPTOPHAN SYNTHASE ALPHA CHAIN, CHLOROPLASTIC"/>
    <property type="match status" value="1"/>
</dbReference>
<dbReference type="PANTHER" id="PTHR43406">
    <property type="entry name" value="TRYPTOPHAN SYNTHASE, ALPHA CHAIN"/>
    <property type="match status" value="1"/>
</dbReference>
<dbReference type="Pfam" id="PF00290">
    <property type="entry name" value="Trp_syntA"/>
    <property type="match status" value="1"/>
</dbReference>
<dbReference type="SUPFAM" id="SSF51366">
    <property type="entry name" value="Ribulose-phoshate binding barrel"/>
    <property type="match status" value="1"/>
</dbReference>
<dbReference type="PROSITE" id="PS00167">
    <property type="entry name" value="TRP_SYNTHASE_ALPHA"/>
    <property type="match status" value="1"/>
</dbReference>
<name>TRPA_LACPL</name>